<dbReference type="EMBL" id="AF099138">
    <property type="protein sequence ID" value="AAD10051.1"/>
    <property type="molecule type" value="mRNA"/>
</dbReference>
<dbReference type="EMBL" id="BC101857">
    <property type="protein sequence ID" value="AAI01858.1"/>
    <property type="molecule type" value="mRNA"/>
</dbReference>
<dbReference type="RefSeq" id="NP_058945.2">
    <property type="nucleotide sequence ID" value="NM_017249.2"/>
</dbReference>
<dbReference type="SMR" id="Q9Z1X1"/>
<dbReference type="BioGRID" id="248212">
    <property type="interactions" value="2"/>
</dbReference>
<dbReference type="FunCoup" id="Q9Z1X1">
    <property type="interactions" value="2126"/>
</dbReference>
<dbReference type="IntAct" id="Q9Z1X1">
    <property type="interactions" value="1"/>
</dbReference>
<dbReference type="STRING" id="10116.ENSRNOP00000070299"/>
<dbReference type="iPTMnet" id="Q9Z1X1"/>
<dbReference type="PhosphoSitePlus" id="Q9Z1X1"/>
<dbReference type="jPOST" id="Q9Z1X1"/>
<dbReference type="PaxDb" id="10116-ENSRNOP00000006119"/>
<dbReference type="GeneID" id="29579"/>
<dbReference type="KEGG" id="rno:29579"/>
<dbReference type="UCSC" id="RGD:3053">
    <property type="organism name" value="rat"/>
</dbReference>
<dbReference type="AGR" id="RGD:3053"/>
<dbReference type="CTD" id="23344"/>
<dbReference type="RGD" id="3053">
    <property type="gene designation" value="Esyt1"/>
</dbReference>
<dbReference type="eggNOG" id="KOG1012">
    <property type="taxonomic scope" value="Eukaryota"/>
</dbReference>
<dbReference type="InParanoid" id="Q9Z1X1"/>
<dbReference type="OrthoDB" id="1029639at2759"/>
<dbReference type="PhylomeDB" id="Q9Z1X1"/>
<dbReference type="TreeFam" id="TF324255"/>
<dbReference type="Reactome" id="R-RNO-9013149">
    <property type="pathway name" value="RAC1 GTPase cycle"/>
</dbReference>
<dbReference type="Reactome" id="R-RNO-9013404">
    <property type="pathway name" value="RAC2 GTPase cycle"/>
</dbReference>
<dbReference type="Reactome" id="R-RNO-9013405">
    <property type="pathway name" value="RHOD GTPase cycle"/>
</dbReference>
<dbReference type="Reactome" id="R-RNO-9013408">
    <property type="pathway name" value="RHOG GTPase cycle"/>
</dbReference>
<dbReference type="Reactome" id="R-RNO-9035034">
    <property type="pathway name" value="RHOF GTPase cycle"/>
</dbReference>
<dbReference type="Reactome" id="R-RNO-9845576">
    <property type="pathway name" value="Glycosphingolipid transport"/>
</dbReference>
<dbReference type="PRO" id="PR:Q9Z1X1"/>
<dbReference type="Proteomes" id="UP000002494">
    <property type="component" value="Unplaced"/>
</dbReference>
<dbReference type="GO" id="GO:0005789">
    <property type="term" value="C:endoplasmic reticulum membrane"/>
    <property type="evidence" value="ECO:0000250"/>
    <property type="project" value="UniProtKB"/>
</dbReference>
<dbReference type="GO" id="GO:0005886">
    <property type="term" value="C:plasma membrane"/>
    <property type="evidence" value="ECO:0007669"/>
    <property type="project" value="UniProtKB-SubCell"/>
</dbReference>
<dbReference type="GO" id="GO:0005509">
    <property type="term" value="F:calcium ion binding"/>
    <property type="evidence" value="ECO:0000318"/>
    <property type="project" value="GO_Central"/>
</dbReference>
<dbReference type="GO" id="GO:0005544">
    <property type="term" value="F:calcium-dependent phospholipid binding"/>
    <property type="evidence" value="ECO:0000318"/>
    <property type="project" value="GO_Central"/>
</dbReference>
<dbReference type="GO" id="GO:0042802">
    <property type="term" value="F:identical protein binding"/>
    <property type="evidence" value="ECO:0000266"/>
    <property type="project" value="RGD"/>
</dbReference>
<dbReference type="GO" id="GO:0031210">
    <property type="term" value="F:phosphatidylcholine binding"/>
    <property type="evidence" value="ECO:0000318"/>
    <property type="project" value="GO_Central"/>
</dbReference>
<dbReference type="GO" id="GO:0008429">
    <property type="term" value="F:phosphatidylethanolamine binding"/>
    <property type="evidence" value="ECO:0000318"/>
    <property type="project" value="GO_Central"/>
</dbReference>
<dbReference type="GO" id="GO:0035091">
    <property type="term" value="F:phosphatidylinositol binding"/>
    <property type="evidence" value="ECO:0000318"/>
    <property type="project" value="GO_Central"/>
</dbReference>
<dbReference type="GO" id="GO:0120014">
    <property type="term" value="F:phospholipid transfer activity"/>
    <property type="evidence" value="ECO:0000250"/>
    <property type="project" value="UniProtKB"/>
</dbReference>
<dbReference type="GO" id="GO:0061817">
    <property type="term" value="P:endoplasmic reticulum-plasma membrane tethering"/>
    <property type="evidence" value="ECO:0007669"/>
    <property type="project" value="InterPro"/>
</dbReference>
<dbReference type="GO" id="GO:0120009">
    <property type="term" value="P:intermembrane lipid transfer"/>
    <property type="evidence" value="ECO:0000250"/>
    <property type="project" value="UniProtKB"/>
</dbReference>
<dbReference type="CDD" id="cd08391">
    <property type="entry name" value="C2A_C2C_Synaptotagmin_like"/>
    <property type="match status" value="2"/>
</dbReference>
<dbReference type="CDD" id="cd04050">
    <property type="entry name" value="C2B_Synaptotagmin-like"/>
    <property type="match status" value="2"/>
</dbReference>
<dbReference type="CDD" id="cd04030">
    <property type="entry name" value="C2C_KIAA1228"/>
    <property type="match status" value="1"/>
</dbReference>
<dbReference type="FunFam" id="2.60.40.150:FF:000025">
    <property type="entry name" value="Extended synaptotagmin 2"/>
    <property type="match status" value="1"/>
</dbReference>
<dbReference type="FunFam" id="2.60.40.150:FF:000106">
    <property type="entry name" value="extended synaptotagmin-1 isoform X1"/>
    <property type="match status" value="1"/>
</dbReference>
<dbReference type="FunFam" id="2.60.40.150:FF:000120">
    <property type="entry name" value="extended synaptotagmin-1 isoform X1"/>
    <property type="match status" value="1"/>
</dbReference>
<dbReference type="FunFam" id="2.60.40.150:FF:000124">
    <property type="entry name" value="extended synaptotagmin-1 isoform X1"/>
    <property type="match status" value="1"/>
</dbReference>
<dbReference type="FunFam" id="2.60.40.150:FF:000139">
    <property type="entry name" value="extended synaptotagmin-1 isoform X1"/>
    <property type="match status" value="1"/>
</dbReference>
<dbReference type="Gene3D" id="2.60.40.150">
    <property type="entry name" value="C2 domain"/>
    <property type="match status" value="5"/>
</dbReference>
<dbReference type="InterPro" id="IPR000008">
    <property type="entry name" value="C2_dom"/>
</dbReference>
<dbReference type="InterPro" id="IPR035892">
    <property type="entry name" value="C2_domain_sf"/>
</dbReference>
<dbReference type="InterPro" id="IPR037752">
    <property type="entry name" value="C2C_KIAA1228"/>
</dbReference>
<dbReference type="InterPro" id="IPR037733">
    <property type="entry name" value="Ext_Synaptotagmin_C2A"/>
</dbReference>
<dbReference type="InterPro" id="IPR037749">
    <property type="entry name" value="Ext_Synaptotagmin_C2B"/>
</dbReference>
<dbReference type="InterPro" id="IPR051634">
    <property type="entry name" value="Extended_Synaptotagmin"/>
</dbReference>
<dbReference type="InterPro" id="IPR031468">
    <property type="entry name" value="SMP_LBD"/>
</dbReference>
<dbReference type="InterPro" id="IPR039010">
    <property type="entry name" value="Synaptotagmin_SMP"/>
</dbReference>
<dbReference type="PANTHER" id="PTHR45761:SF3">
    <property type="entry name" value="EXTENDED SYNAPTOTAGMIN-1"/>
    <property type="match status" value="1"/>
</dbReference>
<dbReference type="PANTHER" id="PTHR45761">
    <property type="entry name" value="EXTENDED SYNAPTOTAGMIN-LIKE PROTEIN 2, ISOFORM C"/>
    <property type="match status" value="1"/>
</dbReference>
<dbReference type="Pfam" id="PF00168">
    <property type="entry name" value="C2"/>
    <property type="match status" value="5"/>
</dbReference>
<dbReference type="Pfam" id="PF17047">
    <property type="entry name" value="SMP_LBD"/>
    <property type="match status" value="1"/>
</dbReference>
<dbReference type="PRINTS" id="PR00360">
    <property type="entry name" value="C2DOMAIN"/>
</dbReference>
<dbReference type="SMART" id="SM00239">
    <property type="entry name" value="C2"/>
    <property type="match status" value="5"/>
</dbReference>
<dbReference type="SUPFAM" id="SSF49562">
    <property type="entry name" value="C2 domain (Calcium/lipid-binding domain, CaLB)"/>
    <property type="match status" value="5"/>
</dbReference>
<dbReference type="PROSITE" id="PS50004">
    <property type="entry name" value="C2"/>
    <property type="match status" value="5"/>
</dbReference>
<dbReference type="PROSITE" id="PS51847">
    <property type="entry name" value="SMP"/>
    <property type="match status" value="1"/>
</dbReference>
<reference key="1">
    <citation type="journal article" date="1999" name="Biochim. Biophys. Acta">
        <title>Cloning and preliminary characterization of a 121 kDa protein with multiple predicted C2 domains.</title>
        <authorList>
            <person name="Morris N.J."/>
            <person name="Ross S.A."/>
            <person name="Neveu J.M."/>
            <person name="Lane W.S."/>
            <person name="Lienhard G.E."/>
        </authorList>
    </citation>
    <scope>NUCLEOTIDE SEQUENCE [MRNA]</scope>
    <scope>TISSUE SPECIFICITY</scope>
    <source>
        <strain>Sprague-Dawley</strain>
    </source>
</reference>
<reference key="2">
    <citation type="journal article" date="2004" name="Genome Res.">
        <title>The status, quality, and expansion of the NIH full-length cDNA project: the Mammalian Gene Collection (MGC).</title>
        <authorList>
            <consortium name="The MGC Project Team"/>
        </authorList>
    </citation>
    <scope>NUCLEOTIDE SEQUENCE [LARGE SCALE MRNA]</scope>
    <source>
        <tissue>Prostate</tissue>
    </source>
</reference>
<reference key="3">
    <citation type="journal article" date="2012" name="Nat. Commun.">
        <title>Quantitative maps of protein phosphorylation sites across 14 different rat organs and tissues.</title>
        <authorList>
            <person name="Lundby A."/>
            <person name="Secher A."/>
            <person name="Lage K."/>
            <person name="Nordsborg N.B."/>
            <person name="Dmytriyev A."/>
            <person name="Lundby C."/>
            <person name="Olsen J.V."/>
        </authorList>
    </citation>
    <scope>PHOSPHORYLATION [LARGE SCALE ANALYSIS] AT TYR-993</scope>
    <scope>IDENTIFICATION BY MASS SPECTROMETRY [LARGE SCALE ANALYSIS]</scope>
</reference>
<evidence type="ECO:0000250" key="1"/>
<evidence type="ECO:0000250" key="2">
    <source>
        <dbReference type="UniProtKB" id="A0FGR8"/>
    </source>
</evidence>
<evidence type="ECO:0000250" key="3">
    <source>
        <dbReference type="UniProtKB" id="Q3U7R1"/>
    </source>
</evidence>
<evidence type="ECO:0000250" key="4">
    <source>
        <dbReference type="UniProtKB" id="Q9BSJ8"/>
    </source>
</evidence>
<evidence type="ECO:0000255" key="5"/>
<evidence type="ECO:0000255" key="6">
    <source>
        <dbReference type="PROSITE-ProRule" id="PRU00041"/>
    </source>
</evidence>
<evidence type="ECO:0000255" key="7">
    <source>
        <dbReference type="PROSITE-ProRule" id="PRU01194"/>
    </source>
</evidence>
<evidence type="ECO:0000256" key="8">
    <source>
        <dbReference type="SAM" id="MobiDB-lite"/>
    </source>
</evidence>
<evidence type="ECO:0000269" key="9">
    <source>
    </source>
</evidence>
<evidence type="ECO:0000305" key="10"/>
<evidence type="ECO:0007744" key="11">
    <source>
    </source>
</evidence>
<protein>
    <recommendedName>
        <fullName>Extended synaptotagmin-1</fullName>
        <shortName>E-Syt1</shortName>
    </recommendedName>
    <alternativeName>
        <fullName>Membrane-bound C2 domain-containing protein</fullName>
    </alternativeName>
    <alternativeName>
        <fullName>vp115</fullName>
    </alternativeName>
</protein>
<feature type="chain" id="PRO_0000234347" description="Extended synaptotagmin-1">
    <location>
        <begin position="1"/>
        <end position="1088"/>
    </location>
</feature>
<feature type="topological domain" description="Cytoplasmic" evidence="5">
    <location>
        <begin position="1"/>
        <end position="30"/>
    </location>
</feature>
<feature type="transmembrane region" description="Helical" evidence="5">
    <location>
        <begin position="31"/>
        <end position="51"/>
    </location>
</feature>
<feature type="topological domain" description="Lumenal" evidence="5">
    <location>
        <begin position="52"/>
        <end position="54"/>
    </location>
</feature>
<feature type="transmembrane region" description="Helical" evidence="5">
    <location>
        <begin position="55"/>
        <end position="75"/>
    </location>
</feature>
<feature type="topological domain" description="Cytoplasmic" evidence="5">
    <location>
        <begin position="76"/>
        <end position="1088"/>
    </location>
</feature>
<feature type="domain" description="SMP-LTD" evidence="7">
    <location>
        <begin position="127"/>
        <end position="305"/>
    </location>
</feature>
<feature type="domain" description="C2 1" evidence="6">
    <location>
        <begin position="304"/>
        <end position="425"/>
    </location>
</feature>
<feature type="domain" description="C2 2" evidence="6">
    <location>
        <begin position="446"/>
        <end position="572"/>
    </location>
</feature>
<feature type="domain" description="C2 3" evidence="6">
    <location>
        <begin position="618"/>
        <end position="740"/>
    </location>
</feature>
<feature type="domain" description="C2 4" evidence="6">
    <location>
        <begin position="771"/>
        <end position="888"/>
    </location>
</feature>
<feature type="domain" description="C2 5" evidence="6">
    <location>
        <begin position="955"/>
        <end position="1077"/>
    </location>
</feature>
<feature type="region of interest" description="Disordered" evidence="8">
    <location>
        <begin position="1"/>
        <end position="38"/>
    </location>
</feature>
<feature type="region of interest" description="Disordered" evidence="8">
    <location>
        <begin position="599"/>
        <end position="630"/>
    </location>
</feature>
<feature type="region of interest" description="Disordered" evidence="8">
    <location>
        <begin position="911"/>
        <end position="930"/>
    </location>
</feature>
<feature type="region of interest" description="Required for phosphatidylinositol 4,5-bisphosphate-dependent location at the cell membrane" evidence="2">
    <location>
        <begin position="1002"/>
        <end position="1009"/>
    </location>
</feature>
<feature type="binding site" evidence="2">
    <location>
        <position position="336"/>
    </location>
    <ligand>
        <name>Ca(2+)</name>
        <dbReference type="ChEBI" id="CHEBI:29108"/>
        <label>1</label>
    </ligand>
</feature>
<feature type="binding site" evidence="2">
    <location>
        <position position="337"/>
    </location>
    <ligand>
        <name>Ca(2+)</name>
        <dbReference type="ChEBI" id="CHEBI:29108"/>
        <label>1</label>
    </ligand>
</feature>
<feature type="binding site" evidence="2">
    <location>
        <position position="337"/>
    </location>
    <ligand>
        <name>Ca(2+)</name>
        <dbReference type="ChEBI" id="CHEBI:29108"/>
        <label>2</label>
    </ligand>
</feature>
<feature type="binding site" evidence="2">
    <location>
        <position position="349"/>
    </location>
    <ligand>
        <name>Ca(2+)</name>
        <dbReference type="ChEBI" id="CHEBI:29108"/>
        <label>2</label>
    </ligand>
</feature>
<feature type="binding site" evidence="2">
    <location>
        <position position="396"/>
    </location>
    <ligand>
        <name>Ca(2+)</name>
        <dbReference type="ChEBI" id="CHEBI:29108"/>
        <label>1</label>
    </ligand>
</feature>
<feature type="binding site" evidence="2">
    <location>
        <position position="396"/>
    </location>
    <ligand>
        <name>Ca(2+)</name>
        <dbReference type="ChEBI" id="CHEBI:29108"/>
        <label>2</label>
    </ligand>
</feature>
<feature type="binding site" evidence="2">
    <location>
        <position position="398"/>
    </location>
    <ligand>
        <name>Ca(2+)</name>
        <dbReference type="ChEBI" id="CHEBI:29108"/>
        <label>1</label>
    </ligand>
</feature>
<feature type="binding site" evidence="2">
    <location>
        <position position="398"/>
    </location>
    <ligand>
        <name>Ca(2+)</name>
        <dbReference type="ChEBI" id="CHEBI:29108"/>
        <label>2</label>
    </ligand>
</feature>
<feature type="binding site" evidence="2">
    <location>
        <position position="398"/>
    </location>
    <ligand>
        <name>Ca(2+)</name>
        <dbReference type="ChEBI" id="CHEBI:29108"/>
        <label>3</label>
    </ligand>
</feature>
<feature type="binding site" evidence="2">
    <location>
        <position position="400"/>
    </location>
    <ligand>
        <name>Ca(2+)</name>
        <dbReference type="ChEBI" id="CHEBI:29108"/>
        <label>3</label>
    </ligand>
</feature>
<feature type="binding site" evidence="2">
    <location>
        <position position="402"/>
    </location>
    <ligand>
        <name>Ca(2+)</name>
        <dbReference type="ChEBI" id="CHEBI:29108"/>
        <label>3</label>
    </ligand>
</feature>
<feature type="binding site" evidence="2">
    <location>
        <position position="403"/>
    </location>
    <ligand>
        <name>Ca(2+)</name>
        <dbReference type="ChEBI" id="CHEBI:29108"/>
        <label>1</label>
    </ligand>
</feature>
<feature type="modified residue" description="N-acetylmethionine" evidence="4">
    <location>
        <position position="1"/>
    </location>
</feature>
<feature type="modified residue" description="Phosphoserine; by CDK5" evidence="3">
    <location>
        <position position="316"/>
    </location>
</feature>
<feature type="modified residue" description="N6-acetyllysine" evidence="4">
    <location>
        <position position="806"/>
    </location>
</feature>
<feature type="modified residue" description="Phosphoserine" evidence="4">
    <location>
        <position position="809"/>
    </location>
</feature>
<feature type="modified residue" description="Phosphoserine" evidence="4">
    <location>
        <position position="933"/>
    </location>
</feature>
<feature type="modified residue" description="Phosphoserine" evidence="4">
    <location>
        <position position="947"/>
    </location>
</feature>
<feature type="modified residue" description="Phosphotyrosine" evidence="11">
    <location>
        <position position="993"/>
    </location>
</feature>
<feature type="sequence conflict" description="In Ref. 2; AAI01858." evidence="10" ref="2">
    <original>H</original>
    <variation>R</variation>
    <location>
        <position position="373"/>
    </location>
</feature>
<organism>
    <name type="scientific">Rattus norvegicus</name>
    <name type="common">Rat</name>
    <dbReference type="NCBI Taxonomy" id="10116"/>
    <lineage>
        <taxon>Eukaryota</taxon>
        <taxon>Metazoa</taxon>
        <taxon>Chordata</taxon>
        <taxon>Craniata</taxon>
        <taxon>Vertebrata</taxon>
        <taxon>Euteleostomi</taxon>
        <taxon>Mammalia</taxon>
        <taxon>Eutheria</taxon>
        <taxon>Euarchontoglires</taxon>
        <taxon>Glires</taxon>
        <taxon>Rodentia</taxon>
        <taxon>Myomorpha</taxon>
        <taxon>Muroidea</taxon>
        <taxon>Muridae</taxon>
        <taxon>Murinae</taxon>
        <taxon>Rattus</taxon>
    </lineage>
</organism>
<comment type="function">
    <text evidence="2 4">Binds calcium (via the C2 domains) and translocates to sites of contact between the endoplasmic reticulum and the cell membrane in response to increased cytosolic calcium levels. Helps tether the endoplasmic reticulum to the cell membrane and promotes the formation of appositions between the endoplasmic reticulum and the cell membrane. Acts as an inhibitor of ADGRD1 G-protein-coupled receptor activity in absence of cytosolic calcium (By similarity). Binds glycerophospholipids in a barrel-like domain and may play a role in cellular lipid transport (By similarity).</text>
</comment>
<comment type="subunit">
    <text evidence="3 4">Interacts with ESYT2 and ESYT3. Interacts with ADGRD1; inhibiting the G-protein-coupled receptor activity of ADGRD1. Interaction with ADGRD1 is abolished when cytosolic calcium increases, relieving ADGRD1 G-protein-coupled receptor activity (By similarity). Interacts (phosphorylated form) with SLC2A4 (By similarity).</text>
</comment>
<comment type="subcellular location">
    <subcellularLocation>
        <location evidence="4">Endoplasmic reticulum membrane</location>
        <topology evidence="5">Multi-pass membrane protein</topology>
    </subcellularLocation>
    <subcellularLocation>
        <location evidence="4">Cell membrane</location>
        <topology evidence="4">Peripheral membrane protein</topology>
    </subcellularLocation>
    <text evidence="4">Localizes primarily to the endoplasmic reticulum. Recruited to sites of contact between the endoplasmic reticulum and the cell membrane in response to increased cytosolic calcium levels.</text>
</comment>
<comment type="tissue specificity">
    <text evidence="9">Ubiquitously expressed with a higher expression in spleen and white adipose tissue.</text>
</comment>
<comment type="domain">
    <text evidence="1">Anchored to the endoplasmic reticulum membrane by a transmembrane hairpin structure; both N-terminus and C-terminus are cytoplasmic.</text>
</comment>
<comment type="domain">
    <text evidence="1">The C2 domains mediate lipid and calcium binding. The N-terminal C2 domain binds calcium ions and is important for calcium-dependent lipid binding and interaction with membranes. Two calcium ions are bound at a high-affinity site and a third calcium ion is bound with lower affinity. May bind up to four calcium ions. In contrast, the second C2 domain apparently does not bind calcium. The third C2 domain mediates interaction with membranes enriched in phosphatidylinositol 4,5-bisphosphate and is required for translocation to the cell membrane in response to increased cytosolic calcium levels (By similarity).</text>
</comment>
<comment type="domain">
    <text evidence="2">The SMP-LTD domain is a barrel-like domain that binds glycerophospholipids in its interior (By similarity).</text>
</comment>
<comment type="PTM">
    <text evidence="1">Phosphorylated on Ser residues in insulin-treated adipocytes (in vitro); this promotes interaction with SLC2A4.</text>
</comment>
<comment type="similarity">
    <text evidence="10">Belongs to the extended synaptotagmin family.</text>
</comment>
<keyword id="KW-0007">Acetylation</keyword>
<keyword id="KW-0106">Calcium</keyword>
<keyword id="KW-1003">Cell membrane</keyword>
<keyword id="KW-0256">Endoplasmic reticulum</keyword>
<keyword id="KW-0445">Lipid transport</keyword>
<keyword id="KW-0446">Lipid-binding</keyword>
<keyword id="KW-0472">Membrane</keyword>
<keyword id="KW-0479">Metal-binding</keyword>
<keyword id="KW-0597">Phosphoprotein</keyword>
<keyword id="KW-1185">Reference proteome</keyword>
<keyword id="KW-0677">Repeat</keyword>
<keyword id="KW-0812">Transmembrane</keyword>
<keyword id="KW-1133">Transmembrane helix</keyword>
<keyword id="KW-0813">Transport</keyword>
<gene>
    <name type="primary">Esyt1</name>
    <name type="synonym">Fam62a</name>
    <name type="synonym">Mbc2</name>
</gene>
<sequence length="1088" mass="121159">MERSPEEGAGPEPSGQSPATDSTRERDGGSGVPPAGPGAASEALAVLTSFGRRLLVLVPVYLAGAAGLSVGFVLFGLALYLGWRRVRDGKERSLRAARQLLDDEERITAETLYMSHRELPAWVSFPDVEKAEWLNKIVVQVWPFLGQYMEKLLAETVAPAVRGANPHLQTFTFTRVELGEKPVRIIGVKVHPSQRKDQILLDLNVSYVGDLQIDVEVKKYFCKAGVKGMQLHGVLRVILEPLIGDLPIVGAVSMFFIKRPTLDINWTGMTNLLDIPGLSSLSDTMIMDSIAAFLVLPNRLLVPLVPDLQDVAQLRSPLPRGIIRIHLLAARGLSSKDKYVKGLIEGKSDPYALVRVGTQTFCSRVIDEELNPHWGETYEVIVHEVPGQEIEVEVFDKDPDKDDFLGRMKLDVGKVLQAGVLDNWYPLQGGQGQVHLRLEWLSLLPDAEKLDQVLQWNRGITSRPEPPSAAILVVYLDRAQDLPLKKGNKEPNPMVQLSVQDVTQESKATYSTNCPVWEEAFRFFLQDPRSQELDVQVKDDSRALTLGALTLPLARLLTASELTLDQWFQLSSSGPNSRLYMKLVMRILYLDSSEMRLPTEPGAQDWDSESPETGSSVDAPPRPYHTTPNSHFGTENVLRIHVLEAQDLIAKDRFLGGLVKGKSDPYVKLKVAGRSLRTHVVREDLNPRWNEVFEVIVTSIPGQELDIEVFDKDLDKDDFLGRYKVGLTTVLNSGFLDEWLTLEDVPSGRLHLRLERLSPRPTAAELEEVLQVNSLIQTQKSSELAAALLSVYLERSEDLPLRKGTKPPSPYAILTVGETSHKTKTVSQTSAPIWEESASFLIRKPHAESLELQVRGEGTGTLGSISLPLSELLQEEQLCLDRWFALSGQGQVLMRVQLGILVSQHSGVEAHSHSSSSLNEEPEVLGDPTHTASPVLEVRHRLTHGDSPSEALIGPLGQVKLTVWYHSDEQKLISIIHSCRALRQNGRDLPDPYVSVLLLPDKNRGTKRKTSQKKRTLNPEFNERFEWDLPLDGTLRRKLDVSVKSNSSFMSRERELLGKVQLDLAEIDLSQGAAQWYDLIDDRDKGGS</sequence>
<proteinExistence type="evidence at protein level"/>
<accession>Q9Z1X1</accession>
<accession>Q3T1L3</accession>
<name>ESYT1_RAT</name>